<accession>A6UPT0</accession>
<proteinExistence type="inferred from homology"/>
<name>DNAG_METVS</name>
<protein>
    <recommendedName>
        <fullName evidence="1">DNA primase DnaG</fullName>
        <ecNumber evidence="1">2.7.7.101</ecNumber>
    </recommendedName>
</protein>
<comment type="function">
    <text evidence="1">RNA polymerase that catalyzes the synthesis of short RNA molecules used as primers for DNA polymerase during DNA replication.</text>
</comment>
<comment type="catalytic activity">
    <reaction evidence="1">
        <text>ssDNA + n NTP = ssDNA/pppN(pN)n-1 hybrid + (n-1) diphosphate.</text>
        <dbReference type="EC" id="2.7.7.101"/>
    </reaction>
</comment>
<comment type="cofactor">
    <cofactor evidence="1">
        <name>Mg(2+)</name>
        <dbReference type="ChEBI" id="CHEBI:18420"/>
    </cofactor>
    <text evidence="1">Binds two Mg(2+) per subunit.</text>
</comment>
<comment type="subunit">
    <text evidence="1">Forms a ternary complex with MCM helicase and DNA.</text>
</comment>
<comment type="similarity">
    <text evidence="1">Belongs to the archaeal DnaG primase family.</text>
</comment>
<evidence type="ECO:0000255" key="1">
    <source>
        <dbReference type="HAMAP-Rule" id="MF_00007"/>
    </source>
</evidence>
<feature type="chain" id="PRO_1000000563" description="DNA primase DnaG">
    <location>
        <begin position="1"/>
        <end position="443"/>
    </location>
</feature>
<feature type="domain" description="Toprim" evidence="1">
    <location>
        <begin position="169"/>
        <end position="243"/>
    </location>
</feature>
<feature type="binding site" evidence="1">
    <location>
        <position position="175"/>
    </location>
    <ligand>
        <name>Mg(2+)</name>
        <dbReference type="ChEBI" id="CHEBI:18420"/>
        <label>1</label>
        <note>catalytic</note>
    </ligand>
</feature>
<feature type="binding site" evidence="1">
    <location>
        <position position="217"/>
    </location>
    <ligand>
        <name>Mg(2+)</name>
        <dbReference type="ChEBI" id="CHEBI:18420"/>
        <label>1</label>
        <note>catalytic</note>
    </ligand>
</feature>
<feature type="binding site" evidence="1">
    <location>
        <position position="217"/>
    </location>
    <ligand>
        <name>Mg(2+)</name>
        <dbReference type="ChEBI" id="CHEBI:18420"/>
        <label>2</label>
    </ligand>
</feature>
<feature type="binding site" evidence="1">
    <location>
        <position position="219"/>
    </location>
    <ligand>
        <name>Mg(2+)</name>
        <dbReference type="ChEBI" id="CHEBI:18420"/>
        <label>2</label>
    </ligand>
</feature>
<dbReference type="EC" id="2.7.7.101" evidence="1"/>
<dbReference type="EMBL" id="CP000742">
    <property type="protein sequence ID" value="ABR54502.1"/>
    <property type="molecule type" value="Genomic_DNA"/>
</dbReference>
<dbReference type="RefSeq" id="WP_011972405.1">
    <property type="nucleotide sequence ID" value="NC_009634.1"/>
</dbReference>
<dbReference type="SMR" id="A6UPT0"/>
<dbReference type="STRING" id="406327.Mevan_0596"/>
<dbReference type="GeneID" id="5326127"/>
<dbReference type="KEGG" id="mvn:Mevan_0596"/>
<dbReference type="eggNOG" id="arCOG04281">
    <property type="taxonomic scope" value="Archaea"/>
</dbReference>
<dbReference type="HOGENOM" id="CLU_034626_0_0_2"/>
<dbReference type="OrthoDB" id="8643at2157"/>
<dbReference type="Proteomes" id="UP000001107">
    <property type="component" value="Chromosome"/>
</dbReference>
<dbReference type="GO" id="GO:0005737">
    <property type="term" value="C:cytoplasm"/>
    <property type="evidence" value="ECO:0007669"/>
    <property type="project" value="TreeGrafter"/>
</dbReference>
<dbReference type="GO" id="GO:0000428">
    <property type="term" value="C:DNA-directed RNA polymerase complex"/>
    <property type="evidence" value="ECO:0007669"/>
    <property type="project" value="UniProtKB-KW"/>
</dbReference>
<dbReference type="GO" id="GO:0000178">
    <property type="term" value="C:exosome (RNase complex)"/>
    <property type="evidence" value="ECO:0007669"/>
    <property type="project" value="InterPro"/>
</dbReference>
<dbReference type="GO" id="GO:1990077">
    <property type="term" value="C:primosome complex"/>
    <property type="evidence" value="ECO:0007669"/>
    <property type="project" value="UniProtKB-KW"/>
</dbReference>
<dbReference type="GO" id="GO:0003899">
    <property type="term" value="F:DNA-directed RNA polymerase activity"/>
    <property type="evidence" value="ECO:0007669"/>
    <property type="project" value="InterPro"/>
</dbReference>
<dbReference type="GO" id="GO:0046872">
    <property type="term" value="F:metal ion binding"/>
    <property type="evidence" value="ECO:0007669"/>
    <property type="project" value="UniProtKB-KW"/>
</dbReference>
<dbReference type="GO" id="GO:0008143">
    <property type="term" value="F:poly(A) binding"/>
    <property type="evidence" value="ECO:0007669"/>
    <property type="project" value="InterPro"/>
</dbReference>
<dbReference type="GO" id="GO:0006269">
    <property type="term" value="P:DNA replication, synthesis of primer"/>
    <property type="evidence" value="ECO:0007669"/>
    <property type="project" value="UniProtKB-UniRule"/>
</dbReference>
<dbReference type="CDD" id="cd01029">
    <property type="entry name" value="TOPRIM_primases"/>
    <property type="match status" value="1"/>
</dbReference>
<dbReference type="FunFam" id="3.40.1360.10:FF:000010">
    <property type="entry name" value="DNA primase DnaG"/>
    <property type="match status" value="1"/>
</dbReference>
<dbReference type="Gene3D" id="3.40.1360.10">
    <property type="match status" value="1"/>
</dbReference>
<dbReference type="HAMAP" id="MF_00007">
    <property type="entry name" value="DNA_primase_DnaG_arc"/>
    <property type="match status" value="1"/>
</dbReference>
<dbReference type="InterPro" id="IPR050219">
    <property type="entry name" value="DnaG_primase"/>
</dbReference>
<dbReference type="InterPro" id="IPR020607">
    <property type="entry name" value="Primase_DnaG_arc"/>
</dbReference>
<dbReference type="InterPro" id="IPR034154">
    <property type="entry name" value="TOPRIM_DnaG/twinkle"/>
</dbReference>
<dbReference type="InterPro" id="IPR006171">
    <property type="entry name" value="TOPRIM_dom"/>
</dbReference>
<dbReference type="NCBIfam" id="NF003108">
    <property type="entry name" value="PRK04031.1-1"/>
    <property type="match status" value="1"/>
</dbReference>
<dbReference type="PANTHER" id="PTHR30313">
    <property type="entry name" value="DNA PRIMASE"/>
    <property type="match status" value="1"/>
</dbReference>
<dbReference type="PANTHER" id="PTHR30313:SF2">
    <property type="entry name" value="DNA PRIMASE"/>
    <property type="match status" value="1"/>
</dbReference>
<dbReference type="Pfam" id="PF01751">
    <property type="entry name" value="Toprim"/>
    <property type="match status" value="1"/>
</dbReference>
<dbReference type="SMART" id="SM00493">
    <property type="entry name" value="TOPRIM"/>
    <property type="match status" value="1"/>
</dbReference>
<dbReference type="SUPFAM" id="SSF56731">
    <property type="entry name" value="DNA primase core"/>
    <property type="match status" value="1"/>
</dbReference>
<dbReference type="PROSITE" id="PS50880">
    <property type="entry name" value="TOPRIM"/>
    <property type="match status" value="1"/>
</dbReference>
<keyword id="KW-0235">DNA replication</keyword>
<keyword id="KW-0240">DNA-directed RNA polymerase</keyword>
<keyword id="KW-0460">Magnesium</keyword>
<keyword id="KW-0479">Metal-binding</keyword>
<keyword id="KW-0548">Nucleotidyltransferase</keyword>
<keyword id="KW-0639">Primosome</keyword>
<keyword id="KW-0804">Transcription</keyword>
<keyword id="KW-0808">Transferase</keyword>
<organism>
    <name type="scientific">Methanococcus vannielii (strain ATCC 35089 / DSM 1224 / JCM 13029 / OCM 148 / SB)</name>
    <dbReference type="NCBI Taxonomy" id="406327"/>
    <lineage>
        <taxon>Archaea</taxon>
        <taxon>Methanobacteriati</taxon>
        <taxon>Methanobacteriota</taxon>
        <taxon>Methanomada group</taxon>
        <taxon>Methanococci</taxon>
        <taxon>Methanococcales</taxon>
        <taxon>Methanococcaceae</taxon>
        <taxon>Methanococcus</taxon>
    </lineage>
</organism>
<gene>
    <name evidence="1" type="primary">dnaG</name>
    <name type="ordered locus">Mevan_0596</name>
</gene>
<reference key="1">
    <citation type="submission" date="2007-06" db="EMBL/GenBank/DDBJ databases">
        <title>Complete sequence of Methanococcus vannielii SB.</title>
        <authorList>
            <consortium name="US DOE Joint Genome Institute"/>
            <person name="Copeland A."/>
            <person name="Lucas S."/>
            <person name="Lapidus A."/>
            <person name="Barry K."/>
            <person name="Glavina del Rio T."/>
            <person name="Dalin E."/>
            <person name="Tice H."/>
            <person name="Pitluck S."/>
            <person name="Chain P."/>
            <person name="Malfatti S."/>
            <person name="Shin M."/>
            <person name="Vergez L."/>
            <person name="Schmutz J."/>
            <person name="Larimer F."/>
            <person name="Land M."/>
            <person name="Hauser L."/>
            <person name="Kyrpides N."/>
            <person name="Anderson I."/>
            <person name="Sieprawska-Lupa M."/>
            <person name="Whitman W.B."/>
            <person name="Richardson P."/>
        </authorList>
    </citation>
    <scope>NUCLEOTIDE SEQUENCE [LARGE SCALE GENOMIC DNA]</scope>
    <source>
        <strain>ATCC 35089 / DSM 1224 / JCM 13029 / OCM 148 / SB</strain>
    </source>
</reference>
<sequence length="443" mass="50055">MDLGTTKYIIYTELIADGYVEKHDVIGAIFGQTEGLLSTELDLRDLQKSGRIGRIDVELENVNGKSFAKITLPSSLDKVETSILAATLETIDRVGPCFATVKIANVEDIRVSKRQYITNRARHILRQLMDEMVDTYEITEEIKESLRTEEIMEYGPENLPCGPNILHSDSIIIVEGRADVLTLLRCGIKNAIAVEGTSVPKTIMEISKKKTTTAFTDGDRGGELILKELLQTCDIDYVSRAPYGKEVEGTSKKEIMKCLRAKVPVEQIIGEKYKNIVESNPVLNEELVEKITPKYIEEVTHSSKEKNELEKTFKPEIEKETVVIEKIKSFEKKTIDADEKTILQENSNLEKKYNGVKEILEGIKNTGLVKFVVDGKEKTNSFKEFLTNIQEIKNMDFFAADMPITQKIVDLLHDKTPIIVGTEIKVTKKPVNLRLFSFDEIME</sequence>